<proteinExistence type="inferred from homology"/>
<feature type="chain" id="PRO_1000074035" description="Ribosome maturation factor RimM">
    <location>
        <begin position="1"/>
        <end position="167"/>
    </location>
</feature>
<feature type="domain" description="PRC barrel" evidence="1">
    <location>
        <begin position="94"/>
        <end position="166"/>
    </location>
</feature>
<organism>
    <name type="scientific">Chlorobium phaeovibrioides (strain DSM 265 / 1930)</name>
    <name type="common">Prosthecochloris vibrioformis (strain DSM 265)</name>
    <dbReference type="NCBI Taxonomy" id="290318"/>
    <lineage>
        <taxon>Bacteria</taxon>
        <taxon>Pseudomonadati</taxon>
        <taxon>Chlorobiota</taxon>
        <taxon>Chlorobiia</taxon>
        <taxon>Chlorobiales</taxon>
        <taxon>Chlorobiaceae</taxon>
        <taxon>Chlorobium/Pelodictyon group</taxon>
        <taxon>Chlorobium</taxon>
    </lineage>
</organism>
<sequence>MELWLTGTILKPKGLKGELKVQPVTDFPDRFLSRTKYFAGRQPETVVPVNVKSATLSQGFAWLFFEGVDSREKAQEMAGMHLYIEEKECAPRPQNRAWLHELEGMRVKGRDGVEVGVLTAILPMPAHEVYEVRTGNGTVLIPAIDEFIDEISLEGGYIVVPRFDEFL</sequence>
<comment type="function">
    <text evidence="1">An accessory protein needed during the final step in the assembly of 30S ribosomal subunit, possibly for assembly of the head region. Essential for efficient processing of 16S rRNA. May be needed both before and after RbfA during the maturation of 16S rRNA. It has affinity for free ribosomal 30S subunits but not for 70S ribosomes.</text>
</comment>
<comment type="subunit">
    <text evidence="1">Binds ribosomal protein uS19.</text>
</comment>
<comment type="subcellular location">
    <subcellularLocation>
        <location evidence="1">Cytoplasm</location>
    </subcellularLocation>
</comment>
<comment type="domain">
    <text evidence="1">The PRC barrel domain binds ribosomal protein uS19.</text>
</comment>
<comment type="similarity">
    <text evidence="1">Belongs to the RimM family.</text>
</comment>
<protein>
    <recommendedName>
        <fullName evidence="1">Ribosome maturation factor RimM</fullName>
    </recommendedName>
</protein>
<reference key="1">
    <citation type="submission" date="2007-03" db="EMBL/GenBank/DDBJ databases">
        <title>Complete sequence of Prosthecochloris vibrioformis DSM 265.</title>
        <authorList>
            <consortium name="US DOE Joint Genome Institute"/>
            <person name="Copeland A."/>
            <person name="Lucas S."/>
            <person name="Lapidus A."/>
            <person name="Barry K."/>
            <person name="Detter J.C."/>
            <person name="Glavina del Rio T."/>
            <person name="Hammon N."/>
            <person name="Israni S."/>
            <person name="Pitluck S."/>
            <person name="Schmutz J."/>
            <person name="Larimer F."/>
            <person name="Land M."/>
            <person name="Hauser L."/>
            <person name="Mikhailova N."/>
            <person name="Li T."/>
            <person name="Overmann J."/>
            <person name="Schuster S.C."/>
            <person name="Bryant D.A."/>
            <person name="Richardson P."/>
        </authorList>
    </citation>
    <scope>NUCLEOTIDE SEQUENCE [LARGE SCALE GENOMIC DNA]</scope>
    <source>
        <strain>DSM 265 / 1930</strain>
    </source>
</reference>
<evidence type="ECO:0000255" key="1">
    <source>
        <dbReference type="HAMAP-Rule" id="MF_00014"/>
    </source>
</evidence>
<keyword id="KW-0143">Chaperone</keyword>
<keyword id="KW-0963">Cytoplasm</keyword>
<keyword id="KW-0690">Ribosome biogenesis</keyword>
<keyword id="KW-0698">rRNA processing</keyword>
<gene>
    <name evidence="1" type="primary">rimM</name>
    <name type="ordered locus">Cvib_0934</name>
</gene>
<dbReference type="EMBL" id="CP000607">
    <property type="protein sequence ID" value="ABP36948.1"/>
    <property type="molecule type" value="Genomic_DNA"/>
</dbReference>
<dbReference type="SMR" id="A4SEN9"/>
<dbReference type="STRING" id="290318.Cvib_0934"/>
<dbReference type="KEGG" id="pvi:Cvib_0934"/>
<dbReference type="eggNOG" id="COG0806">
    <property type="taxonomic scope" value="Bacteria"/>
</dbReference>
<dbReference type="HOGENOM" id="CLU_077636_3_2_10"/>
<dbReference type="OrthoDB" id="9810331at2"/>
<dbReference type="GO" id="GO:0005737">
    <property type="term" value="C:cytoplasm"/>
    <property type="evidence" value="ECO:0007669"/>
    <property type="project" value="UniProtKB-SubCell"/>
</dbReference>
<dbReference type="GO" id="GO:0005840">
    <property type="term" value="C:ribosome"/>
    <property type="evidence" value="ECO:0007669"/>
    <property type="project" value="InterPro"/>
</dbReference>
<dbReference type="GO" id="GO:0043022">
    <property type="term" value="F:ribosome binding"/>
    <property type="evidence" value="ECO:0007669"/>
    <property type="project" value="InterPro"/>
</dbReference>
<dbReference type="GO" id="GO:0042274">
    <property type="term" value="P:ribosomal small subunit biogenesis"/>
    <property type="evidence" value="ECO:0007669"/>
    <property type="project" value="UniProtKB-UniRule"/>
</dbReference>
<dbReference type="GO" id="GO:0006364">
    <property type="term" value="P:rRNA processing"/>
    <property type="evidence" value="ECO:0007669"/>
    <property type="project" value="UniProtKB-UniRule"/>
</dbReference>
<dbReference type="Gene3D" id="2.30.30.240">
    <property type="entry name" value="PRC-barrel domain"/>
    <property type="match status" value="1"/>
</dbReference>
<dbReference type="Gene3D" id="2.40.30.60">
    <property type="entry name" value="RimM"/>
    <property type="match status" value="1"/>
</dbReference>
<dbReference type="HAMAP" id="MF_00014">
    <property type="entry name" value="Ribosome_mat_RimM"/>
    <property type="match status" value="1"/>
</dbReference>
<dbReference type="InterPro" id="IPR011033">
    <property type="entry name" value="PRC_barrel-like_sf"/>
</dbReference>
<dbReference type="InterPro" id="IPR056792">
    <property type="entry name" value="PRC_RimM"/>
</dbReference>
<dbReference type="InterPro" id="IPR011961">
    <property type="entry name" value="RimM"/>
</dbReference>
<dbReference type="InterPro" id="IPR002676">
    <property type="entry name" value="RimM_N"/>
</dbReference>
<dbReference type="InterPro" id="IPR036976">
    <property type="entry name" value="RimM_N_sf"/>
</dbReference>
<dbReference type="InterPro" id="IPR009000">
    <property type="entry name" value="Transl_B-barrel_sf"/>
</dbReference>
<dbReference type="NCBIfam" id="TIGR02273">
    <property type="entry name" value="16S_RimM"/>
    <property type="match status" value="1"/>
</dbReference>
<dbReference type="PANTHER" id="PTHR33692">
    <property type="entry name" value="RIBOSOME MATURATION FACTOR RIMM"/>
    <property type="match status" value="1"/>
</dbReference>
<dbReference type="PANTHER" id="PTHR33692:SF1">
    <property type="entry name" value="RIBOSOME MATURATION FACTOR RIMM"/>
    <property type="match status" value="1"/>
</dbReference>
<dbReference type="Pfam" id="PF24986">
    <property type="entry name" value="PRC_RimM"/>
    <property type="match status" value="1"/>
</dbReference>
<dbReference type="Pfam" id="PF01782">
    <property type="entry name" value="RimM"/>
    <property type="match status" value="1"/>
</dbReference>
<dbReference type="SUPFAM" id="SSF50346">
    <property type="entry name" value="PRC-barrel domain"/>
    <property type="match status" value="1"/>
</dbReference>
<dbReference type="SUPFAM" id="SSF50447">
    <property type="entry name" value="Translation proteins"/>
    <property type="match status" value="1"/>
</dbReference>
<name>RIMM_CHLPM</name>
<accession>A4SEN9</accession>